<feature type="chain" id="PRO_1000008120" description="DNA mismatch repair protein MutS">
    <location>
        <begin position="1"/>
        <end position="851"/>
    </location>
</feature>
<feature type="binding site" evidence="1">
    <location>
        <begin position="614"/>
        <end position="621"/>
    </location>
    <ligand>
        <name>ATP</name>
        <dbReference type="ChEBI" id="CHEBI:30616"/>
    </ligand>
</feature>
<gene>
    <name evidence="1" type="primary">mutS</name>
    <name type="ordered locus">YPDSF_3006</name>
</gene>
<protein>
    <recommendedName>
        <fullName evidence="1">DNA mismatch repair protein MutS</fullName>
    </recommendedName>
</protein>
<reference key="1">
    <citation type="submission" date="2007-02" db="EMBL/GenBank/DDBJ databases">
        <title>Complete sequence of chromosome of Yersinia pestis Pestoides F.</title>
        <authorList>
            <consortium name="US DOE Joint Genome Institute"/>
            <person name="Copeland A."/>
            <person name="Lucas S."/>
            <person name="Lapidus A."/>
            <person name="Barry K."/>
            <person name="Detter J.C."/>
            <person name="Glavina del Rio T."/>
            <person name="Hammon N."/>
            <person name="Israni S."/>
            <person name="Dalin E."/>
            <person name="Tice H."/>
            <person name="Pitluck S."/>
            <person name="Di Bartolo G."/>
            <person name="Chain P."/>
            <person name="Malfatti S."/>
            <person name="Shin M."/>
            <person name="Vergez L."/>
            <person name="Schmutz J."/>
            <person name="Larimer F."/>
            <person name="Land M."/>
            <person name="Hauser L."/>
            <person name="Worsham P."/>
            <person name="Chu M."/>
            <person name="Bearden S."/>
            <person name="Garcia E."/>
            <person name="Richardson P."/>
        </authorList>
    </citation>
    <scope>NUCLEOTIDE SEQUENCE [LARGE SCALE GENOMIC DNA]</scope>
    <source>
        <strain>Pestoides F</strain>
    </source>
</reference>
<accession>A4TQ04</accession>
<dbReference type="EMBL" id="CP000668">
    <property type="protein sequence ID" value="ABP41366.1"/>
    <property type="molecule type" value="Genomic_DNA"/>
</dbReference>
<dbReference type="RefSeq" id="WP_002209399.1">
    <property type="nucleotide sequence ID" value="NZ_CP009715.1"/>
</dbReference>
<dbReference type="SMR" id="A4TQ04"/>
<dbReference type="GeneID" id="57975355"/>
<dbReference type="KEGG" id="ypp:YPDSF_3006"/>
<dbReference type="PATRIC" id="fig|386656.14.peg.1356"/>
<dbReference type="GO" id="GO:0005829">
    <property type="term" value="C:cytosol"/>
    <property type="evidence" value="ECO:0007669"/>
    <property type="project" value="TreeGrafter"/>
</dbReference>
<dbReference type="GO" id="GO:0005524">
    <property type="term" value="F:ATP binding"/>
    <property type="evidence" value="ECO:0007669"/>
    <property type="project" value="UniProtKB-UniRule"/>
</dbReference>
<dbReference type="GO" id="GO:0140664">
    <property type="term" value="F:ATP-dependent DNA damage sensor activity"/>
    <property type="evidence" value="ECO:0007669"/>
    <property type="project" value="InterPro"/>
</dbReference>
<dbReference type="GO" id="GO:0003684">
    <property type="term" value="F:damaged DNA binding"/>
    <property type="evidence" value="ECO:0007669"/>
    <property type="project" value="UniProtKB-UniRule"/>
</dbReference>
<dbReference type="GO" id="GO:0030983">
    <property type="term" value="F:mismatched DNA binding"/>
    <property type="evidence" value="ECO:0007669"/>
    <property type="project" value="InterPro"/>
</dbReference>
<dbReference type="GO" id="GO:0006298">
    <property type="term" value="P:mismatch repair"/>
    <property type="evidence" value="ECO:0007669"/>
    <property type="project" value="UniProtKB-UniRule"/>
</dbReference>
<dbReference type="CDD" id="cd03284">
    <property type="entry name" value="ABC_MutS1"/>
    <property type="match status" value="1"/>
</dbReference>
<dbReference type="FunFam" id="1.10.1420.10:FF:000002">
    <property type="entry name" value="DNA mismatch repair protein MutS"/>
    <property type="match status" value="1"/>
</dbReference>
<dbReference type="FunFam" id="3.30.420.110:FF:000001">
    <property type="entry name" value="DNA mismatch repair protein MutS"/>
    <property type="match status" value="1"/>
</dbReference>
<dbReference type="FunFam" id="3.40.1170.10:FF:000001">
    <property type="entry name" value="DNA mismatch repair protein MutS"/>
    <property type="match status" value="1"/>
</dbReference>
<dbReference type="FunFam" id="3.40.50.300:FF:000283">
    <property type="entry name" value="DNA mismatch repair protein MutS"/>
    <property type="match status" value="1"/>
</dbReference>
<dbReference type="Gene3D" id="1.10.1420.10">
    <property type="match status" value="2"/>
</dbReference>
<dbReference type="Gene3D" id="6.10.140.430">
    <property type="match status" value="1"/>
</dbReference>
<dbReference type="Gene3D" id="3.40.1170.10">
    <property type="entry name" value="DNA repair protein MutS, domain I"/>
    <property type="match status" value="1"/>
</dbReference>
<dbReference type="Gene3D" id="3.30.420.110">
    <property type="entry name" value="MutS, connector domain"/>
    <property type="match status" value="1"/>
</dbReference>
<dbReference type="Gene3D" id="3.40.50.300">
    <property type="entry name" value="P-loop containing nucleotide triphosphate hydrolases"/>
    <property type="match status" value="1"/>
</dbReference>
<dbReference type="HAMAP" id="MF_00096">
    <property type="entry name" value="MutS"/>
    <property type="match status" value="1"/>
</dbReference>
<dbReference type="InterPro" id="IPR005748">
    <property type="entry name" value="DNA_mismatch_repair_MutS"/>
</dbReference>
<dbReference type="InterPro" id="IPR007695">
    <property type="entry name" value="DNA_mismatch_repair_MutS-lik_N"/>
</dbReference>
<dbReference type="InterPro" id="IPR017261">
    <property type="entry name" value="DNA_mismatch_repair_MutS/MSH"/>
</dbReference>
<dbReference type="InterPro" id="IPR000432">
    <property type="entry name" value="DNA_mismatch_repair_MutS_C"/>
</dbReference>
<dbReference type="InterPro" id="IPR007861">
    <property type="entry name" value="DNA_mismatch_repair_MutS_clamp"/>
</dbReference>
<dbReference type="InterPro" id="IPR007696">
    <property type="entry name" value="DNA_mismatch_repair_MutS_core"/>
</dbReference>
<dbReference type="InterPro" id="IPR016151">
    <property type="entry name" value="DNA_mismatch_repair_MutS_N"/>
</dbReference>
<dbReference type="InterPro" id="IPR036187">
    <property type="entry name" value="DNA_mismatch_repair_MutS_sf"/>
</dbReference>
<dbReference type="InterPro" id="IPR007860">
    <property type="entry name" value="DNA_mmatch_repair_MutS_con_dom"/>
</dbReference>
<dbReference type="InterPro" id="IPR045076">
    <property type="entry name" value="MutS"/>
</dbReference>
<dbReference type="InterPro" id="IPR036678">
    <property type="entry name" value="MutS_con_dom_sf"/>
</dbReference>
<dbReference type="InterPro" id="IPR027417">
    <property type="entry name" value="P-loop_NTPase"/>
</dbReference>
<dbReference type="NCBIfam" id="TIGR01070">
    <property type="entry name" value="mutS1"/>
    <property type="match status" value="1"/>
</dbReference>
<dbReference type="NCBIfam" id="NF003810">
    <property type="entry name" value="PRK05399.1"/>
    <property type="match status" value="1"/>
</dbReference>
<dbReference type="PANTHER" id="PTHR11361:SF34">
    <property type="entry name" value="DNA MISMATCH REPAIR PROTEIN MSH1, MITOCHONDRIAL"/>
    <property type="match status" value="1"/>
</dbReference>
<dbReference type="PANTHER" id="PTHR11361">
    <property type="entry name" value="DNA MISMATCH REPAIR PROTEIN MUTS FAMILY MEMBER"/>
    <property type="match status" value="1"/>
</dbReference>
<dbReference type="Pfam" id="PF01624">
    <property type="entry name" value="MutS_I"/>
    <property type="match status" value="1"/>
</dbReference>
<dbReference type="Pfam" id="PF05188">
    <property type="entry name" value="MutS_II"/>
    <property type="match status" value="1"/>
</dbReference>
<dbReference type="Pfam" id="PF05192">
    <property type="entry name" value="MutS_III"/>
    <property type="match status" value="1"/>
</dbReference>
<dbReference type="Pfam" id="PF05190">
    <property type="entry name" value="MutS_IV"/>
    <property type="match status" value="1"/>
</dbReference>
<dbReference type="Pfam" id="PF00488">
    <property type="entry name" value="MutS_V"/>
    <property type="match status" value="1"/>
</dbReference>
<dbReference type="PIRSF" id="PIRSF037677">
    <property type="entry name" value="DNA_mis_repair_Msh6"/>
    <property type="match status" value="1"/>
</dbReference>
<dbReference type="SMART" id="SM00534">
    <property type="entry name" value="MUTSac"/>
    <property type="match status" value="1"/>
</dbReference>
<dbReference type="SMART" id="SM00533">
    <property type="entry name" value="MUTSd"/>
    <property type="match status" value="1"/>
</dbReference>
<dbReference type="SUPFAM" id="SSF55271">
    <property type="entry name" value="DNA repair protein MutS, domain I"/>
    <property type="match status" value="1"/>
</dbReference>
<dbReference type="SUPFAM" id="SSF53150">
    <property type="entry name" value="DNA repair protein MutS, domain II"/>
    <property type="match status" value="1"/>
</dbReference>
<dbReference type="SUPFAM" id="SSF48334">
    <property type="entry name" value="DNA repair protein MutS, domain III"/>
    <property type="match status" value="1"/>
</dbReference>
<dbReference type="SUPFAM" id="SSF52540">
    <property type="entry name" value="P-loop containing nucleoside triphosphate hydrolases"/>
    <property type="match status" value="1"/>
</dbReference>
<dbReference type="PROSITE" id="PS00486">
    <property type="entry name" value="DNA_MISMATCH_REPAIR_2"/>
    <property type="match status" value="1"/>
</dbReference>
<sequence>MKNNDKLDSHTPMMQQYLRLKAQHPEILLFYRMGDFYELFYSDAKRASQLLDISLTKRGASAGEPIPMAGVPYHSIENYLAKLVQLGESAAICEQIGDPATSKGPVERKVVRIVTPGTISDEALLQERQDNLLAAIWQDAKGFGYATLDISSGRFRVAEPADLETMAAELQRTNPAELLYPENFEPMSLIEHRHGLRRRPLWEFELDTAKQQLNLQFGTRDLIGFGVEQAHLALRAAGCLLQYVKDTQRTSLPHIRGLTMERQQDGIIMDAATRRNLELTQNLSGGSENTLAAILDCSVTPMGSRMLKRWLHMPIRDIRVLTDRQQAIGGLQDIAAELQTPLRQVGDLERILARLALRTARPRDLARMRHAFQQLPEIHRLLQPIDVPHVQNLLSQVGQFDELQDLLERAIVETPPVLVRDGGVIASGYNAELDEWRALADGATDYLDRLEIREREKLGLDTLKVGFNGVHGYYIQVSRGQSHLVPIHYVRRQTLKNAERYIIPELKEYEDKVLTSKGKALAIEKGLYEEIFDLLLPHLPELQLSANALAELDVLANLAERAETLNYSCPTLSDKPGIKIMGGRHPVVEQVLKEPFISNPLTLSPQRRMLIITGPNMGGKSTYMRQTALIVLLAHLGSYVPADQATIGPIDRIFTRVGAADDLASGRSTFMVEMTETANILHNATEQSLVLMDEIGRGTSTYDGLSLAWACAENLASRIKAMTLFATHYFELTTLPEKMEGVVNVHLDALEHGETIAFMHSVQEGAASKSYGLAVAALAGVPRDVIKRARQKLKELESLSNNAAASTIDGSQMTLLNEEIPPAVEALEALDPDSLSPRQALEWIYRLKNMV</sequence>
<name>MUTS_YERPP</name>
<comment type="function">
    <text evidence="1">This protein is involved in the repair of mismatches in DNA. It is possible that it carries out the mismatch recognition step. This protein has a weak ATPase activity.</text>
</comment>
<comment type="similarity">
    <text evidence="1">Belongs to the DNA mismatch repair MutS family.</text>
</comment>
<proteinExistence type="inferred from homology"/>
<organism>
    <name type="scientific">Yersinia pestis (strain Pestoides F)</name>
    <dbReference type="NCBI Taxonomy" id="386656"/>
    <lineage>
        <taxon>Bacteria</taxon>
        <taxon>Pseudomonadati</taxon>
        <taxon>Pseudomonadota</taxon>
        <taxon>Gammaproteobacteria</taxon>
        <taxon>Enterobacterales</taxon>
        <taxon>Yersiniaceae</taxon>
        <taxon>Yersinia</taxon>
    </lineage>
</organism>
<keyword id="KW-0067">ATP-binding</keyword>
<keyword id="KW-0227">DNA damage</keyword>
<keyword id="KW-0234">DNA repair</keyword>
<keyword id="KW-0238">DNA-binding</keyword>
<keyword id="KW-0547">Nucleotide-binding</keyword>
<evidence type="ECO:0000255" key="1">
    <source>
        <dbReference type="HAMAP-Rule" id="MF_00096"/>
    </source>
</evidence>